<name>5MP2_MOUSE</name>
<gene>
    <name type="primary">Bzw1</name>
    <name evidence="1" type="synonym">5mp2</name>
</gene>
<keyword id="KW-0007">Acetylation</keyword>
<keyword id="KW-0010">Activator</keyword>
<keyword id="KW-1017">Isopeptide bond</keyword>
<keyword id="KW-0597">Phosphoprotein</keyword>
<keyword id="KW-1185">Reference proteome</keyword>
<keyword id="KW-0804">Transcription</keyword>
<keyword id="KW-0805">Transcription regulation</keyword>
<keyword id="KW-0810">Translation regulation</keyword>
<keyword id="KW-0832">Ubl conjugation</keyword>
<accession>Q9CQC6</accession>
<accession>Q3THS5</accession>
<accession>Q3UZ94</accession>
<dbReference type="EMBL" id="AK004784">
    <property type="protein sequence ID" value="BAB23562.1"/>
    <property type="molecule type" value="mRNA"/>
</dbReference>
<dbReference type="EMBL" id="AK013980">
    <property type="protein sequence ID" value="BAB29098.1"/>
    <property type="molecule type" value="mRNA"/>
</dbReference>
<dbReference type="EMBL" id="AK076086">
    <property type="protein sequence ID" value="BAC36172.1"/>
    <property type="molecule type" value="mRNA"/>
</dbReference>
<dbReference type="EMBL" id="AK076560">
    <property type="protein sequence ID" value="BAC36393.1"/>
    <property type="molecule type" value="mRNA"/>
</dbReference>
<dbReference type="EMBL" id="AK088322">
    <property type="protein sequence ID" value="BAC40280.1"/>
    <property type="molecule type" value="mRNA"/>
</dbReference>
<dbReference type="EMBL" id="AK133973">
    <property type="protein sequence ID" value="BAE21963.1"/>
    <property type="molecule type" value="mRNA"/>
</dbReference>
<dbReference type="EMBL" id="AK151919">
    <property type="protein sequence ID" value="BAE30797.1"/>
    <property type="molecule type" value="mRNA"/>
</dbReference>
<dbReference type="EMBL" id="AK153538">
    <property type="protein sequence ID" value="BAE32075.1"/>
    <property type="molecule type" value="mRNA"/>
</dbReference>
<dbReference type="EMBL" id="AK161192">
    <property type="protein sequence ID" value="BAE36231.1"/>
    <property type="molecule type" value="mRNA"/>
</dbReference>
<dbReference type="EMBL" id="AK166247">
    <property type="protein sequence ID" value="BAE38658.1"/>
    <property type="molecule type" value="mRNA"/>
</dbReference>
<dbReference type="EMBL" id="AK167074">
    <property type="protein sequence ID" value="BAE39234.1"/>
    <property type="molecule type" value="mRNA"/>
</dbReference>
<dbReference type="EMBL" id="AK168158">
    <property type="protein sequence ID" value="BAE40121.1"/>
    <property type="molecule type" value="mRNA"/>
</dbReference>
<dbReference type="EMBL" id="BC005466">
    <property type="protein sequence ID" value="AAH05466.1"/>
    <property type="molecule type" value="mRNA"/>
</dbReference>
<dbReference type="EMBL" id="BC028865">
    <property type="protein sequence ID" value="AAH28865.1"/>
    <property type="molecule type" value="mRNA"/>
</dbReference>
<dbReference type="CCDS" id="CCDS14971.1"/>
<dbReference type="RefSeq" id="NP_080100.1">
    <property type="nucleotide sequence ID" value="NM_025824.4"/>
</dbReference>
<dbReference type="SMR" id="Q9CQC6"/>
<dbReference type="BioGRID" id="211786">
    <property type="interactions" value="16"/>
</dbReference>
<dbReference type="FunCoup" id="Q9CQC6">
    <property type="interactions" value="3680"/>
</dbReference>
<dbReference type="IntAct" id="Q9CQC6">
    <property type="interactions" value="2"/>
</dbReference>
<dbReference type="MINT" id="Q9CQC6"/>
<dbReference type="STRING" id="10090.ENSMUSP00000051935"/>
<dbReference type="iPTMnet" id="Q9CQC6"/>
<dbReference type="MetOSite" id="Q9CQC6"/>
<dbReference type="PhosphoSitePlus" id="Q9CQC6"/>
<dbReference type="SwissPalm" id="Q9CQC6"/>
<dbReference type="jPOST" id="Q9CQC6"/>
<dbReference type="PaxDb" id="10090-ENSMUSP00000051935"/>
<dbReference type="PeptideAtlas" id="Q9CQC6"/>
<dbReference type="ProteomicsDB" id="273850"/>
<dbReference type="Pumba" id="Q9CQC6"/>
<dbReference type="Antibodypedia" id="47644">
    <property type="antibodies" value="85 antibodies from 19 providers"/>
</dbReference>
<dbReference type="DNASU" id="66882"/>
<dbReference type="Ensembl" id="ENSMUST00000050552.15">
    <property type="protein sequence ID" value="ENSMUSP00000051935.9"/>
    <property type="gene ID" value="ENSMUSG00000051223.15"/>
</dbReference>
<dbReference type="GeneID" id="66882"/>
<dbReference type="KEGG" id="mmu:66882"/>
<dbReference type="UCSC" id="uc007bbq.1">
    <property type="organism name" value="mouse"/>
</dbReference>
<dbReference type="AGR" id="MGI:1914132"/>
<dbReference type="CTD" id="9689"/>
<dbReference type="MGI" id="MGI:1914132">
    <property type="gene designation" value="Bzw1"/>
</dbReference>
<dbReference type="VEuPathDB" id="HostDB:ENSMUSG00000051223"/>
<dbReference type="eggNOG" id="KOG2297">
    <property type="taxonomic scope" value="Eukaryota"/>
</dbReference>
<dbReference type="GeneTree" id="ENSGT00390000012561"/>
<dbReference type="HOGENOM" id="CLU_032849_0_1_1"/>
<dbReference type="InParanoid" id="Q9CQC6"/>
<dbReference type="OrthoDB" id="24601at9989"/>
<dbReference type="PhylomeDB" id="Q9CQC6"/>
<dbReference type="TreeFam" id="TF324313"/>
<dbReference type="BioGRID-ORCS" id="66882">
    <property type="hits" value="7 hits in 77 CRISPR screens"/>
</dbReference>
<dbReference type="ChiTaRS" id="Bzw1">
    <property type="organism name" value="mouse"/>
</dbReference>
<dbReference type="PRO" id="PR:Q9CQC6"/>
<dbReference type="Proteomes" id="UP000000589">
    <property type="component" value="Chromosome 1"/>
</dbReference>
<dbReference type="RNAct" id="Q9CQC6">
    <property type="molecule type" value="protein"/>
</dbReference>
<dbReference type="Bgee" id="ENSMUSG00000051223">
    <property type="expression patterns" value="Expressed in ureter smooth muscle and 260 other cell types or tissues"/>
</dbReference>
<dbReference type="ExpressionAtlas" id="Q9CQC6">
    <property type="expression patterns" value="baseline and differential"/>
</dbReference>
<dbReference type="GO" id="GO:0005737">
    <property type="term" value="C:cytoplasm"/>
    <property type="evidence" value="ECO:0007669"/>
    <property type="project" value="Ensembl"/>
</dbReference>
<dbReference type="GO" id="GO:0006446">
    <property type="term" value="P:regulation of translational initiation"/>
    <property type="evidence" value="ECO:0000250"/>
    <property type="project" value="UniProtKB"/>
</dbReference>
<dbReference type="CDD" id="cd11560">
    <property type="entry name" value="W2_eIF5C_like"/>
    <property type="match status" value="1"/>
</dbReference>
<dbReference type="FunFam" id="1.25.40.180:FF:000006">
    <property type="entry name" value="Basic leucine zipper and W2 domain-containing protein 1"/>
    <property type="match status" value="1"/>
</dbReference>
<dbReference type="Gene3D" id="1.25.40.180">
    <property type="match status" value="1"/>
</dbReference>
<dbReference type="InterPro" id="IPR016024">
    <property type="entry name" value="ARM-type_fold"/>
</dbReference>
<dbReference type="InterPro" id="IPR051245">
    <property type="entry name" value="eIF5-mimic_regulator"/>
</dbReference>
<dbReference type="InterPro" id="IPR043510">
    <property type="entry name" value="W2_BZW1/2"/>
</dbReference>
<dbReference type="InterPro" id="IPR003307">
    <property type="entry name" value="W2_domain"/>
</dbReference>
<dbReference type="PANTHER" id="PTHR14208">
    <property type="entry name" value="BASIC LEUCINE ZIPPER AND W2 DOMAIN-CONTAINING PROTEIN"/>
    <property type="match status" value="1"/>
</dbReference>
<dbReference type="PANTHER" id="PTHR14208:SF0">
    <property type="entry name" value="EIF5-MIMIC PROTEIN 2"/>
    <property type="match status" value="1"/>
</dbReference>
<dbReference type="Pfam" id="PF25504">
    <property type="entry name" value="HEAT_5MP1_2"/>
    <property type="match status" value="1"/>
</dbReference>
<dbReference type="Pfam" id="PF02020">
    <property type="entry name" value="W2"/>
    <property type="match status" value="1"/>
</dbReference>
<dbReference type="SMART" id="SM00515">
    <property type="entry name" value="eIF5C"/>
    <property type="match status" value="1"/>
</dbReference>
<dbReference type="SUPFAM" id="SSF48371">
    <property type="entry name" value="ARM repeat"/>
    <property type="match status" value="1"/>
</dbReference>
<dbReference type="PROSITE" id="PS51363">
    <property type="entry name" value="W2"/>
    <property type="match status" value="1"/>
</dbReference>
<evidence type="ECO:0000250" key="1">
    <source>
        <dbReference type="UniProtKB" id="Q7L1Q6"/>
    </source>
</evidence>
<evidence type="ECO:0000255" key="2">
    <source>
        <dbReference type="PROSITE-ProRule" id="PRU00695"/>
    </source>
</evidence>
<evidence type="ECO:0000256" key="3">
    <source>
        <dbReference type="SAM" id="MobiDB-lite"/>
    </source>
</evidence>
<evidence type="ECO:0000269" key="4">
    <source>
    </source>
</evidence>
<evidence type="ECO:0000305" key="5"/>
<evidence type="ECO:0007744" key="6">
    <source>
    </source>
</evidence>
<evidence type="ECO:0007744" key="7">
    <source>
    </source>
</evidence>
<organism>
    <name type="scientific">Mus musculus</name>
    <name type="common">Mouse</name>
    <dbReference type="NCBI Taxonomy" id="10090"/>
    <lineage>
        <taxon>Eukaryota</taxon>
        <taxon>Metazoa</taxon>
        <taxon>Chordata</taxon>
        <taxon>Craniata</taxon>
        <taxon>Vertebrata</taxon>
        <taxon>Euteleostomi</taxon>
        <taxon>Mammalia</taxon>
        <taxon>Eutheria</taxon>
        <taxon>Euarchontoglires</taxon>
        <taxon>Glires</taxon>
        <taxon>Rodentia</taxon>
        <taxon>Myomorpha</taxon>
        <taxon>Muroidea</taxon>
        <taxon>Muridae</taxon>
        <taxon>Murinae</taxon>
        <taxon>Mus</taxon>
        <taxon>Mus</taxon>
    </lineage>
</organism>
<protein>
    <recommendedName>
        <fullName evidence="1">eIF5-mimic protein 2</fullName>
    </recommendedName>
    <alternativeName>
        <fullName>Basic leucine zipper and W2 domain-containing protein 1</fullName>
    </alternativeName>
</protein>
<comment type="function">
    <text evidence="1">Translation initiation regulator which represses repeat-associated non-AUG (RAN) initiated translation probably by acting as a competitive inhibitor of eukaryotic translation initiation factor 5 (EIF5) function (By similarity). Enhances histone H4 gene transcription but does not seem to bind DNA directly (By similarity).</text>
</comment>
<comment type="tissue specificity">
    <text evidence="4">Broadly expressed, with highest levels in testis.</text>
</comment>
<comment type="similarity">
    <text evidence="5">Belongs to the BZW family.</text>
</comment>
<proteinExistence type="evidence at protein level"/>
<feature type="chain" id="PRO_0000254610" description="eIF5-mimic protein 2">
    <location>
        <begin position="1"/>
        <end position="419"/>
    </location>
</feature>
<feature type="domain" description="W2" evidence="2">
    <location>
        <begin position="247"/>
        <end position="414"/>
    </location>
</feature>
<feature type="region of interest" description="Disordered" evidence="3">
    <location>
        <begin position="1"/>
        <end position="26"/>
    </location>
</feature>
<feature type="compositionally biased region" description="Polar residues" evidence="3">
    <location>
        <begin position="1"/>
        <end position="15"/>
    </location>
</feature>
<feature type="modified residue" description="N-acetylmethionine" evidence="6">
    <location>
        <position position="1"/>
    </location>
</feature>
<feature type="modified residue" description="Phosphoserine" evidence="1">
    <location>
        <position position="12"/>
    </location>
</feature>
<feature type="modified residue" description="Phosphoserine" evidence="7">
    <location>
        <position position="411"/>
    </location>
</feature>
<feature type="modified residue" description="Phosphoserine" evidence="7">
    <location>
        <position position="413"/>
    </location>
</feature>
<feature type="cross-link" description="Glycyl lysine isopeptide (Lys-Gly) (interchain with G-Cter in SUMO2)" evidence="1">
    <location>
        <position position="368"/>
    </location>
</feature>
<feature type="sequence conflict" description="In Ref. 1; BAE40121." evidence="5" ref="1">
    <original>Q</original>
    <variation>K</variation>
    <location>
        <position position="38"/>
    </location>
</feature>
<sequence>MNNQKQQKPTLSGQRFKTRKRDEKERFDPTQFQDCIIQGLTETGTDLEAVAKFLDASGAKLDYRRYAETLFDILVAGGMLAPGGTLADDMMRTDVCVFAAQEDLETMQAFAQVFNKLIRRYKYLEKGFEDEVKKLLLFLKGFSESERNKLAMLTGVLLANGTLNASILNSLYNENLVKEGVSAAFAVKLFKSWINEKDINAVAASLRKVSMDNRLMELFPANKQSVEHFTKYFTEAGLKELSEYVRNQQTIGARKELQKELQEQMSRGDPFKDIILYVKEEMKKNNIPEPVVIGIVWSSVMSTVEWNKKEELVAEQAIKHLKQYSPLLAAFTTQGQSELTLLLKIQEYCYDNIHFMKAFQKIVVLFYKAEVLSEEPILKWYKDAHVAKGKSVFLEQMKKFVEWLKNAEEESESEAEEGD</sequence>
<reference key="1">
    <citation type="journal article" date="2005" name="Science">
        <title>The transcriptional landscape of the mammalian genome.</title>
        <authorList>
            <person name="Carninci P."/>
            <person name="Kasukawa T."/>
            <person name="Katayama S."/>
            <person name="Gough J."/>
            <person name="Frith M.C."/>
            <person name="Maeda N."/>
            <person name="Oyama R."/>
            <person name="Ravasi T."/>
            <person name="Lenhard B."/>
            <person name="Wells C."/>
            <person name="Kodzius R."/>
            <person name="Shimokawa K."/>
            <person name="Bajic V.B."/>
            <person name="Brenner S.E."/>
            <person name="Batalov S."/>
            <person name="Forrest A.R."/>
            <person name="Zavolan M."/>
            <person name="Davis M.J."/>
            <person name="Wilming L.G."/>
            <person name="Aidinis V."/>
            <person name="Allen J.E."/>
            <person name="Ambesi-Impiombato A."/>
            <person name="Apweiler R."/>
            <person name="Aturaliya R.N."/>
            <person name="Bailey T.L."/>
            <person name="Bansal M."/>
            <person name="Baxter L."/>
            <person name="Beisel K.W."/>
            <person name="Bersano T."/>
            <person name="Bono H."/>
            <person name="Chalk A.M."/>
            <person name="Chiu K.P."/>
            <person name="Choudhary V."/>
            <person name="Christoffels A."/>
            <person name="Clutterbuck D.R."/>
            <person name="Crowe M.L."/>
            <person name="Dalla E."/>
            <person name="Dalrymple B.P."/>
            <person name="de Bono B."/>
            <person name="Della Gatta G."/>
            <person name="di Bernardo D."/>
            <person name="Down T."/>
            <person name="Engstrom P."/>
            <person name="Fagiolini M."/>
            <person name="Faulkner G."/>
            <person name="Fletcher C.F."/>
            <person name="Fukushima T."/>
            <person name="Furuno M."/>
            <person name="Futaki S."/>
            <person name="Gariboldi M."/>
            <person name="Georgii-Hemming P."/>
            <person name="Gingeras T.R."/>
            <person name="Gojobori T."/>
            <person name="Green R.E."/>
            <person name="Gustincich S."/>
            <person name="Harbers M."/>
            <person name="Hayashi Y."/>
            <person name="Hensch T.K."/>
            <person name="Hirokawa N."/>
            <person name="Hill D."/>
            <person name="Huminiecki L."/>
            <person name="Iacono M."/>
            <person name="Ikeo K."/>
            <person name="Iwama A."/>
            <person name="Ishikawa T."/>
            <person name="Jakt M."/>
            <person name="Kanapin A."/>
            <person name="Katoh M."/>
            <person name="Kawasawa Y."/>
            <person name="Kelso J."/>
            <person name="Kitamura H."/>
            <person name="Kitano H."/>
            <person name="Kollias G."/>
            <person name="Krishnan S.P."/>
            <person name="Kruger A."/>
            <person name="Kummerfeld S.K."/>
            <person name="Kurochkin I.V."/>
            <person name="Lareau L.F."/>
            <person name="Lazarevic D."/>
            <person name="Lipovich L."/>
            <person name="Liu J."/>
            <person name="Liuni S."/>
            <person name="McWilliam S."/>
            <person name="Madan Babu M."/>
            <person name="Madera M."/>
            <person name="Marchionni L."/>
            <person name="Matsuda H."/>
            <person name="Matsuzawa S."/>
            <person name="Miki H."/>
            <person name="Mignone F."/>
            <person name="Miyake S."/>
            <person name="Morris K."/>
            <person name="Mottagui-Tabar S."/>
            <person name="Mulder N."/>
            <person name="Nakano N."/>
            <person name="Nakauchi H."/>
            <person name="Ng P."/>
            <person name="Nilsson R."/>
            <person name="Nishiguchi S."/>
            <person name="Nishikawa S."/>
            <person name="Nori F."/>
            <person name="Ohara O."/>
            <person name="Okazaki Y."/>
            <person name="Orlando V."/>
            <person name="Pang K.C."/>
            <person name="Pavan W.J."/>
            <person name="Pavesi G."/>
            <person name="Pesole G."/>
            <person name="Petrovsky N."/>
            <person name="Piazza S."/>
            <person name="Reed J."/>
            <person name="Reid J.F."/>
            <person name="Ring B.Z."/>
            <person name="Ringwald M."/>
            <person name="Rost B."/>
            <person name="Ruan Y."/>
            <person name="Salzberg S.L."/>
            <person name="Sandelin A."/>
            <person name="Schneider C."/>
            <person name="Schoenbach C."/>
            <person name="Sekiguchi K."/>
            <person name="Semple C.A."/>
            <person name="Seno S."/>
            <person name="Sessa L."/>
            <person name="Sheng Y."/>
            <person name="Shibata Y."/>
            <person name="Shimada H."/>
            <person name="Shimada K."/>
            <person name="Silva D."/>
            <person name="Sinclair B."/>
            <person name="Sperling S."/>
            <person name="Stupka E."/>
            <person name="Sugiura K."/>
            <person name="Sultana R."/>
            <person name="Takenaka Y."/>
            <person name="Taki K."/>
            <person name="Tammoja K."/>
            <person name="Tan S.L."/>
            <person name="Tang S."/>
            <person name="Taylor M.S."/>
            <person name="Tegner J."/>
            <person name="Teichmann S.A."/>
            <person name="Ueda H.R."/>
            <person name="van Nimwegen E."/>
            <person name="Verardo R."/>
            <person name="Wei C.L."/>
            <person name="Yagi K."/>
            <person name="Yamanishi H."/>
            <person name="Zabarovsky E."/>
            <person name="Zhu S."/>
            <person name="Zimmer A."/>
            <person name="Hide W."/>
            <person name="Bult C."/>
            <person name="Grimmond S.M."/>
            <person name="Teasdale R.D."/>
            <person name="Liu E.T."/>
            <person name="Brusic V."/>
            <person name="Quackenbush J."/>
            <person name="Wahlestedt C."/>
            <person name="Mattick J.S."/>
            <person name="Hume D.A."/>
            <person name="Kai C."/>
            <person name="Sasaki D."/>
            <person name="Tomaru Y."/>
            <person name="Fukuda S."/>
            <person name="Kanamori-Katayama M."/>
            <person name="Suzuki M."/>
            <person name="Aoki J."/>
            <person name="Arakawa T."/>
            <person name="Iida J."/>
            <person name="Imamura K."/>
            <person name="Itoh M."/>
            <person name="Kato T."/>
            <person name="Kawaji H."/>
            <person name="Kawagashira N."/>
            <person name="Kawashima T."/>
            <person name="Kojima M."/>
            <person name="Kondo S."/>
            <person name="Konno H."/>
            <person name="Nakano K."/>
            <person name="Ninomiya N."/>
            <person name="Nishio T."/>
            <person name="Okada M."/>
            <person name="Plessy C."/>
            <person name="Shibata K."/>
            <person name="Shiraki T."/>
            <person name="Suzuki S."/>
            <person name="Tagami M."/>
            <person name="Waki K."/>
            <person name="Watahiki A."/>
            <person name="Okamura-Oho Y."/>
            <person name="Suzuki H."/>
            <person name="Kawai J."/>
            <person name="Hayashizaki Y."/>
        </authorList>
    </citation>
    <scope>NUCLEOTIDE SEQUENCE [LARGE SCALE MRNA]</scope>
    <source>
        <strain>BALB/cJ</strain>
        <strain>C57BL/6J</strain>
        <strain>NOD</strain>
        <tissue>Bone marrow</tissue>
        <tissue>Embryo</tissue>
        <tissue>Head</tissue>
        <tissue>Lung</tissue>
        <tissue>Mammary gland</tissue>
        <tissue>Testis</tissue>
        <tissue>Thymus</tissue>
    </source>
</reference>
<reference key="2">
    <citation type="journal article" date="2004" name="Genome Res.">
        <title>The status, quality, and expansion of the NIH full-length cDNA project: the Mammalian Gene Collection (MGC).</title>
        <authorList>
            <consortium name="The MGC Project Team"/>
        </authorList>
    </citation>
    <scope>NUCLEOTIDE SEQUENCE [LARGE SCALE MRNA]</scope>
    <source>
        <strain>FVB/N</strain>
        <tissue>Mammary tumor</tissue>
        <tissue>Salivary gland</tissue>
    </source>
</reference>
<reference key="3">
    <citation type="journal article" date="2006" name="Biochem. Biophys. Res. Commun.">
        <title>Alternative 3' UTR polyadenylation of Bzw1 transcripts display differential translation efficiency and tissue-specific expression.</title>
        <authorList>
            <person name="Yu M."/>
            <person name="Sha H."/>
            <person name="Gao Y."/>
            <person name="Zeng H."/>
            <person name="Zhu M."/>
            <person name="Gao X."/>
        </authorList>
    </citation>
    <scope>TISSUE SPECIFICITY</scope>
</reference>
<reference key="4">
    <citation type="journal article" date="2006" name="Mol. Cell. Proteomics">
        <title>Comprehensive identification of phosphorylation sites in postsynaptic density preparations.</title>
        <authorList>
            <person name="Trinidad J.C."/>
            <person name="Specht C.G."/>
            <person name="Thalhammer A."/>
            <person name="Schoepfer R."/>
            <person name="Burlingame A.L."/>
        </authorList>
    </citation>
    <scope>ACETYLATION [LARGE SCALE ANALYSIS] AT MET-1</scope>
    <scope>IDENTIFICATION BY MASS SPECTROMETRY [LARGE SCALE ANALYSIS]</scope>
    <source>
        <tissue>Brain</tissue>
    </source>
</reference>
<reference key="5">
    <citation type="journal article" date="2010" name="Cell">
        <title>A tissue-specific atlas of mouse protein phosphorylation and expression.</title>
        <authorList>
            <person name="Huttlin E.L."/>
            <person name="Jedrychowski M.P."/>
            <person name="Elias J.E."/>
            <person name="Goswami T."/>
            <person name="Rad R."/>
            <person name="Beausoleil S.A."/>
            <person name="Villen J."/>
            <person name="Haas W."/>
            <person name="Sowa M.E."/>
            <person name="Gygi S.P."/>
        </authorList>
    </citation>
    <scope>PHOSPHORYLATION [LARGE SCALE ANALYSIS] AT SER-411 AND SER-413</scope>
    <scope>IDENTIFICATION BY MASS SPECTROMETRY [LARGE SCALE ANALYSIS]</scope>
    <source>
        <tissue>Brain</tissue>
        <tissue>Brown adipose tissue</tissue>
        <tissue>Heart</tissue>
        <tissue>Kidney</tissue>
        <tissue>Liver</tissue>
        <tissue>Lung</tissue>
        <tissue>Spleen</tissue>
        <tissue>Testis</tissue>
    </source>
</reference>